<keyword id="KW-0002">3D-structure</keyword>
<keyword id="KW-0997">Cell inner membrane</keyword>
<keyword id="KW-1003">Cell membrane</keyword>
<keyword id="KW-0448">Lipopolysaccharide biosynthesis</keyword>
<keyword id="KW-0472">Membrane</keyword>
<keyword id="KW-1185">Reference proteome</keyword>
<keyword id="KW-0808">Transferase</keyword>
<evidence type="ECO:0000269" key="1">
    <source>
    </source>
</evidence>
<evidence type="ECO:0000269" key="2">
    <source>
    </source>
</evidence>
<evidence type="ECO:0000305" key="3"/>
<evidence type="ECO:0000305" key="4">
    <source>
    </source>
</evidence>
<evidence type="ECO:0007744" key="5">
    <source>
        <dbReference type="PDB" id="2XCI"/>
    </source>
</evidence>
<evidence type="ECO:0007744" key="6">
    <source>
        <dbReference type="PDB" id="2XCU"/>
    </source>
</evidence>
<evidence type="ECO:0007829" key="7">
    <source>
        <dbReference type="PDB" id="2XCI"/>
    </source>
</evidence>
<organism>
    <name type="scientific">Aquifex aeolicus (strain VF5)</name>
    <dbReference type="NCBI Taxonomy" id="224324"/>
    <lineage>
        <taxon>Bacteria</taxon>
        <taxon>Pseudomonadati</taxon>
        <taxon>Aquificota</taxon>
        <taxon>Aquificia</taxon>
        <taxon>Aquificales</taxon>
        <taxon>Aquificaceae</taxon>
        <taxon>Aquifex</taxon>
    </lineage>
</organism>
<sequence>MQFEVLKRFFPKESLKNCKGALWVHTASIGEFNTFLPILKELKREHRILLTYFSPRAREYLKTKSDFYDCLHPLPLDNPFSVKRFEELSKPKALIVVEREFWPSLIIFTKVPKILVNAYAKGSLIEKILSKKFDLIIMRTQEDVEKFKTFGAKRVFSCGNLKFICQKGKGIKLKGEFIVAGSIHTGEVEIILKAFKEIKKTYSSLKLILVPRHIENAKIFEKKARDFGFKTSFFENLEGDVILVDRFGILKELYPVGKIAIVGGTFVNIGGHNLLEPTCWGIPVIYGPYTHKVNDLKEFLEKEGAGFEVKNETELVTKLTELLSVKKEIKVEEKSREIKGCYLEKLREFLRGL</sequence>
<protein>
    <recommendedName>
        <fullName>3-deoxy-D-manno-octulosonic acid transferase</fullName>
        <shortName>Kdo transferase</shortName>
        <ecNumber evidence="1 2">2.4.99.12</ecNumber>
    </recommendedName>
    <alternativeName>
        <fullName>Lipid IV(A) 3-deoxy-D-manno-octulosonic acid transferase</fullName>
    </alternativeName>
    <alternativeName>
        <fullName>Monofunctional Kdo transferase</fullName>
    </alternativeName>
</protein>
<accession>O66663</accession>
<proteinExistence type="evidence at protein level"/>
<name>KDTA_AQUAE</name>
<comment type="function">
    <text evidence="1">Involved in lipopolysaccharide (LPS) biosynthesis. Catalyzes the transfer of a single 3-deoxy-D-manno-octulosonate (Kdo) residue from CMP-Kdo to lipid IV(A), the tetraacyldisaccharide-1,4'-bisphosphate precursor of lipid A. Is strictly monofunctional, i.e. is capable of adding only a single Kdo residue to the acceptor lipid.</text>
</comment>
<comment type="catalytic activity">
    <reaction evidence="1 2">
        <text>lipid IVA (E. coli) + CMP-3-deoxy-beta-D-manno-octulosonate = alpha-Kdo-(2-&gt;6)-lipid IVA (E. coli) + CMP + H(+)</text>
        <dbReference type="Rhea" id="RHEA:28066"/>
        <dbReference type="ChEBI" id="CHEBI:15378"/>
        <dbReference type="ChEBI" id="CHEBI:58603"/>
        <dbReference type="ChEBI" id="CHEBI:60364"/>
        <dbReference type="ChEBI" id="CHEBI:60377"/>
        <dbReference type="ChEBI" id="CHEBI:85987"/>
        <dbReference type="EC" id="2.4.99.12"/>
    </reaction>
</comment>
<comment type="biophysicochemical properties">
    <temperatureDependence>
        <text evidence="1">Highly thermostable. Does not lose activity after 16 hours at 70 or 80 degrees Celsius, but incubation of the enzyme at 90 and 99 degrees Celsius for 1 hour results in gradual loss of activity.</text>
    </temperatureDependence>
</comment>
<comment type="pathway">
    <text>Bacterial outer membrane biogenesis; LPS core biosynthesis.</text>
</comment>
<comment type="subunit">
    <text evidence="1 2">Can form homodimer, homotrimer and homotetramer.</text>
</comment>
<comment type="subcellular location">
    <subcellularLocation>
        <location evidence="4">Cell inner membrane</location>
        <topology evidence="4">Peripheral membrane protein</topology>
        <orientation evidence="4">Cytoplasmic side</orientation>
    </subcellularLocation>
</comment>
<comment type="similarity">
    <text evidence="3">Belongs to the glycosyltransferase group 1 family. Glycosyltransferase 30 subfamily.</text>
</comment>
<gene>
    <name type="primary">kdtA</name>
    <name type="ordered locus">aq_326</name>
</gene>
<dbReference type="EC" id="2.4.99.12" evidence="1 2"/>
<dbReference type="EMBL" id="AE000657">
    <property type="protein sequence ID" value="AAC06622.1"/>
    <property type="molecule type" value="Genomic_DNA"/>
</dbReference>
<dbReference type="PIR" id="C70329">
    <property type="entry name" value="C70329"/>
</dbReference>
<dbReference type="RefSeq" id="NP_213223.1">
    <property type="nucleotide sequence ID" value="NC_000918.1"/>
</dbReference>
<dbReference type="RefSeq" id="WP_010880161.1">
    <property type="nucleotide sequence ID" value="NC_000918.1"/>
</dbReference>
<dbReference type="PDB" id="2XCI">
    <property type="method" value="X-ray"/>
    <property type="resolution" value="2.00 A"/>
    <property type="chains" value="A/B/C/D=1-353"/>
</dbReference>
<dbReference type="PDB" id="2XCU">
    <property type="method" value="X-ray"/>
    <property type="resolution" value="2.42 A"/>
    <property type="chains" value="A/B/C/D=1-353"/>
</dbReference>
<dbReference type="PDBsum" id="2XCI"/>
<dbReference type="PDBsum" id="2XCU"/>
<dbReference type="SMR" id="O66663"/>
<dbReference type="FunCoup" id="O66663">
    <property type="interactions" value="192"/>
</dbReference>
<dbReference type="STRING" id="224324.aq_326"/>
<dbReference type="CAZy" id="GT30">
    <property type="family name" value="Glycosyltransferase Family 30"/>
</dbReference>
<dbReference type="EnsemblBacteria" id="AAC06622">
    <property type="protein sequence ID" value="AAC06622"/>
    <property type="gene ID" value="aq_326"/>
</dbReference>
<dbReference type="KEGG" id="aae:aq_326"/>
<dbReference type="eggNOG" id="COG1519">
    <property type="taxonomic scope" value="Bacteria"/>
</dbReference>
<dbReference type="HOGENOM" id="CLU_036146_2_0_0"/>
<dbReference type="InParanoid" id="O66663"/>
<dbReference type="OrthoDB" id="9789797at2"/>
<dbReference type="BRENDA" id="2.4.99.12">
    <property type="organism ID" value="396"/>
</dbReference>
<dbReference type="UniPathway" id="UPA00958"/>
<dbReference type="EvolutionaryTrace" id="O66663"/>
<dbReference type="Proteomes" id="UP000000798">
    <property type="component" value="Chromosome"/>
</dbReference>
<dbReference type="GO" id="GO:0005886">
    <property type="term" value="C:plasma membrane"/>
    <property type="evidence" value="ECO:0000318"/>
    <property type="project" value="GO_Central"/>
</dbReference>
<dbReference type="GO" id="GO:0043842">
    <property type="term" value="F:Kdo transferase activity"/>
    <property type="evidence" value="ECO:0007669"/>
    <property type="project" value="UniProtKB-EC"/>
</dbReference>
<dbReference type="GO" id="GO:0016740">
    <property type="term" value="F:transferase activity"/>
    <property type="evidence" value="ECO:0000318"/>
    <property type="project" value="GO_Central"/>
</dbReference>
<dbReference type="GO" id="GO:0009245">
    <property type="term" value="P:lipid A biosynthetic process"/>
    <property type="evidence" value="ECO:0000318"/>
    <property type="project" value="GO_Central"/>
</dbReference>
<dbReference type="GO" id="GO:0009244">
    <property type="term" value="P:lipopolysaccharide core region biosynthetic process"/>
    <property type="evidence" value="ECO:0007669"/>
    <property type="project" value="UniProtKB-UniPathway"/>
</dbReference>
<dbReference type="FunFam" id="3.40.50.2000:FF:000032">
    <property type="entry name" value="3-deoxy-D-manno-octulosonic acid transferase"/>
    <property type="match status" value="1"/>
</dbReference>
<dbReference type="Gene3D" id="3.40.50.11720">
    <property type="entry name" value="3-Deoxy-D-manno-octulosonic-acid transferase, N-terminal domain"/>
    <property type="match status" value="1"/>
</dbReference>
<dbReference type="Gene3D" id="3.40.50.2000">
    <property type="entry name" value="Glycogen Phosphorylase B"/>
    <property type="match status" value="1"/>
</dbReference>
<dbReference type="InterPro" id="IPR007507">
    <property type="entry name" value="Glycos_transf_N"/>
</dbReference>
<dbReference type="InterPro" id="IPR038107">
    <property type="entry name" value="Glycos_transf_N_sf"/>
</dbReference>
<dbReference type="InterPro" id="IPR039901">
    <property type="entry name" value="Kdotransferase"/>
</dbReference>
<dbReference type="PANTHER" id="PTHR42755:SF1">
    <property type="entry name" value="3-DEOXY-D-MANNO-OCTULOSONIC ACID TRANSFERASE, MITOCHONDRIAL-RELATED"/>
    <property type="match status" value="1"/>
</dbReference>
<dbReference type="PANTHER" id="PTHR42755">
    <property type="entry name" value="3-DEOXY-MANNO-OCTULOSONATE CYTIDYLYLTRANSFERASE"/>
    <property type="match status" value="1"/>
</dbReference>
<dbReference type="Pfam" id="PF04413">
    <property type="entry name" value="Glycos_transf_N"/>
    <property type="match status" value="1"/>
</dbReference>
<dbReference type="SUPFAM" id="SSF53756">
    <property type="entry name" value="UDP-Glycosyltransferase/glycogen phosphorylase"/>
    <property type="match status" value="1"/>
</dbReference>
<reference key="1">
    <citation type="journal article" date="1998" name="Nature">
        <title>The complete genome of the hyperthermophilic bacterium Aquifex aeolicus.</title>
        <authorList>
            <person name="Deckert G."/>
            <person name="Warren P.V."/>
            <person name="Gaasterland T."/>
            <person name="Young W.G."/>
            <person name="Lenox A.L."/>
            <person name="Graham D.E."/>
            <person name="Overbeek R."/>
            <person name="Snead M.A."/>
            <person name="Keller M."/>
            <person name="Aujay M."/>
            <person name="Huber R."/>
            <person name="Feldman R.A."/>
            <person name="Short J.M."/>
            <person name="Olsen G.J."/>
            <person name="Swanson R.V."/>
        </authorList>
    </citation>
    <scope>NUCLEOTIDE SEQUENCE [LARGE SCALE GENOMIC DNA]</scope>
    <source>
        <strain>VF5</strain>
    </source>
</reference>
<reference key="2">
    <citation type="journal article" date="2009" name="J. Biol. Chem.">
        <title>WaaA of the hyperthermophilic bacterium Aquifex aeolicus is a monofunctional 3-deoxy-D-manno-oct-2-ulosonic acid transferase involved in lipopolysaccharide biosynthesis.</title>
        <authorList>
            <person name="Mamat U."/>
            <person name="Schmidt H."/>
            <person name="Munoz E."/>
            <person name="Lindner B."/>
            <person name="Fukase K."/>
            <person name="Hanuszkiewicz A."/>
            <person name="Wu J."/>
            <person name="Meredith T.C."/>
            <person name="Woodard R.W."/>
            <person name="Hilgenfeld R."/>
            <person name="Mesters J.R."/>
            <person name="Holst O."/>
        </authorList>
    </citation>
    <scope>FUNCTION</scope>
    <scope>CATALYTIC ACTIVITY</scope>
    <scope>SUBSTRATE SPECIFICITY</scope>
    <scope>TEMPERATURE DEPENDENCE</scope>
    <scope>SUBUNIT</scope>
</reference>
<reference evidence="5 6" key="3">
    <citation type="journal article" date="2012" name="Proc. Natl. Acad. Sci. U.S.A.">
        <title>Structural and mechanistic analysis of the membrane-embedded glycosyltransferase WaaA required for lipopolysaccharide synthesis.</title>
        <authorList>
            <person name="Schmidt H."/>
            <person name="Hansen G."/>
            <person name="Singh S."/>
            <person name="Hanuszkiewicz A."/>
            <person name="Lindner B."/>
            <person name="Fukase K."/>
            <person name="Woodard R.W."/>
            <person name="Holst O."/>
            <person name="Hilgenfeld R."/>
            <person name="Mamat U."/>
            <person name="Mesters J.R."/>
        </authorList>
    </citation>
    <scope>X-RAY CRYSTALLOGRAPHY (2.00 ANGSTROMS) OF APOENZYME AND IN COMPLEX WITH CMP</scope>
    <scope>CATALYTIC ACTIVITY</scope>
    <scope>SUBCELLULAR LOCATION</scope>
    <scope>REACTION MECHANISM</scope>
    <scope>ACTIVE SITE</scope>
    <scope>MUTAGENESIS OF GLY-30; GLU-31; GLU-98; LYS-162; ARG-212 AND GLU-276</scope>
</reference>
<feature type="chain" id="PRO_0000419171" description="3-deoxy-D-manno-octulosonic acid transferase">
    <location>
        <begin position="1"/>
        <end position="353"/>
    </location>
</feature>
<feature type="active site" description="Proton acceptor" evidence="2">
    <location>
        <position position="31"/>
    </location>
</feature>
<feature type="binding site" evidence="2 6">
    <location>
        <begin position="211"/>
        <end position="212"/>
    </location>
    <ligand>
        <name>CMP</name>
        <dbReference type="ChEBI" id="CHEBI:60377"/>
    </ligand>
</feature>
<feature type="binding site" evidence="2 6">
    <location>
        <begin position="247"/>
        <end position="249"/>
    </location>
    <ligand>
        <name>CMP</name>
        <dbReference type="ChEBI" id="CHEBI:60377"/>
    </ligand>
</feature>
<feature type="binding site" evidence="2 6">
    <location>
        <begin position="273"/>
        <end position="276"/>
    </location>
    <ligand>
        <name>CMP</name>
        <dbReference type="ChEBI" id="CHEBI:60377"/>
    </ligand>
</feature>
<feature type="site" description="Transition state stabilizer">
    <location>
        <position position="98"/>
    </location>
</feature>
<feature type="site" description="Transition state stabilizer">
    <location>
        <position position="162"/>
    </location>
</feature>
<feature type="mutagenesis site" description="Complete loss of catalytic activity." evidence="2">
    <original>G</original>
    <variation>A</variation>
    <location>
        <position position="30"/>
    </location>
</feature>
<feature type="mutagenesis site" description="Large decrease in catalytic activity." evidence="2">
    <original>E</original>
    <variation>A</variation>
    <location>
        <position position="31"/>
    </location>
</feature>
<feature type="mutagenesis site" description="Nearly complete loss of catalytic activity." evidence="2">
    <original>E</original>
    <variation>A</variation>
    <location>
        <position position="98"/>
    </location>
</feature>
<feature type="mutagenesis site" description="Large decrease in catalytic activity." evidence="2">
    <original>K</original>
    <variation>A</variation>
    <location>
        <position position="162"/>
    </location>
</feature>
<feature type="mutagenesis site" description="Decrease in catalytic activity." evidence="2">
    <original>R</original>
    <variation>A</variation>
    <location>
        <position position="212"/>
    </location>
</feature>
<feature type="mutagenesis site" description="Decrease in catalytic activity." evidence="2">
    <original>E</original>
    <variation>A</variation>
    <location>
        <position position="276"/>
    </location>
</feature>
<feature type="helix" evidence="7">
    <location>
        <begin position="5"/>
        <end position="9"/>
    </location>
</feature>
<feature type="helix" evidence="7">
    <location>
        <begin position="13"/>
        <end position="18"/>
    </location>
</feature>
<feature type="strand" evidence="7">
    <location>
        <begin position="22"/>
        <end position="25"/>
    </location>
</feature>
<feature type="helix" evidence="7">
    <location>
        <begin position="29"/>
        <end position="45"/>
    </location>
</feature>
<feature type="strand" evidence="7">
    <location>
        <begin position="48"/>
        <end position="53"/>
    </location>
</feature>
<feature type="helix" evidence="7">
    <location>
        <begin position="55"/>
        <end position="57"/>
    </location>
</feature>
<feature type="helix" evidence="7">
    <location>
        <begin position="58"/>
        <end position="62"/>
    </location>
</feature>
<feature type="helix" evidence="7">
    <location>
        <begin position="63"/>
        <end position="67"/>
    </location>
</feature>
<feature type="strand" evidence="7">
    <location>
        <begin position="69"/>
        <end position="73"/>
    </location>
</feature>
<feature type="helix" evidence="7">
    <location>
        <begin position="79"/>
        <end position="89"/>
    </location>
</feature>
<feature type="strand" evidence="7">
    <location>
        <begin position="92"/>
        <end position="98"/>
    </location>
</feature>
<feature type="helix" evidence="7">
    <location>
        <begin position="103"/>
        <end position="108"/>
    </location>
</feature>
<feature type="strand" evidence="7">
    <location>
        <begin position="113"/>
        <end position="118"/>
    </location>
</feature>
<feature type="helix" evidence="7">
    <location>
        <begin position="124"/>
        <end position="130"/>
    </location>
</feature>
<feature type="strand" evidence="7">
    <location>
        <begin position="134"/>
        <end position="139"/>
    </location>
</feature>
<feature type="helix" evidence="7">
    <location>
        <begin position="141"/>
        <end position="148"/>
    </location>
</feature>
<feature type="turn" evidence="7">
    <location>
        <begin position="149"/>
        <end position="151"/>
    </location>
</feature>
<feature type="strand" evidence="7">
    <location>
        <begin position="154"/>
        <end position="157"/>
    </location>
</feature>
<feature type="helix" evidence="7">
    <location>
        <begin position="161"/>
        <end position="163"/>
    </location>
</feature>
<feature type="strand" evidence="7">
    <location>
        <begin position="177"/>
        <end position="183"/>
    </location>
</feature>
<feature type="helix" evidence="7">
    <location>
        <begin position="185"/>
        <end position="187"/>
    </location>
</feature>
<feature type="helix" evidence="7">
    <location>
        <begin position="188"/>
        <end position="199"/>
    </location>
</feature>
<feature type="strand" evidence="7">
    <location>
        <begin position="206"/>
        <end position="213"/>
    </location>
</feature>
<feature type="helix" evidence="7">
    <location>
        <begin position="214"/>
        <end position="216"/>
    </location>
</feature>
<feature type="helix" evidence="7">
    <location>
        <begin position="217"/>
        <end position="226"/>
    </location>
</feature>
<feature type="strand" evidence="7">
    <location>
        <begin position="231"/>
        <end position="233"/>
    </location>
</feature>
<feature type="strand" evidence="7">
    <location>
        <begin position="239"/>
        <end position="243"/>
    </location>
</feature>
<feature type="strand" evidence="7">
    <location>
        <begin position="246"/>
        <end position="248"/>
    </location>
</feature>
<feature type="helix" evidence="7">
    <location>
        <begin position="250"/>
        <end position="253"/>
    </location>
</feature>
<feature type="helix" evidence="7">
    <location>
        <begin position="254"/>
        <end position="256"/>
    </location>
</feature>
<feature type="strand" evidence="7">
    <location>
        <begin position="257"/>
        <end position="262"/>
    </location>
</feature>
<feature type="strand" evidence="7">
    <location>
        <begin position="264"/>
        <end position="269"/>
    </location>
</feature>
<feature type="helix" evidence="7">
    <location>
        <begin position="275"/>
        <end position="278"/>
    </location>
</feature>
<feature type="turn" evidence="7">
    <location>
        <begin position="279"/>
        <end position="281"/>
    </location>
</feature>
<feature type="strand" evidence="7">
    <location>
        <begin position="284"/>
        <end position="286"/>
    </location>
</feature>
<feature type="helix" evidence="7">
    <location>
        <begin position="294"/>
        <end position="302"/>
    </location>
</feature>
<feature type="strand" evidence="7">
    <location>
        <begin position="306"/>
        <end position="308"/>
    </location>
</feature>
<feature type="helix" evidence="7">
    <location>
        <begin position="312"/>
        <end position="324"/>
    </location>
</feature>
<feature type="helix" evidence="7">
    <location>
        <begin position="331"/>
        <end position="351"/>
    </location>
</feature>